<organism>
    <name type="scientific">Dictyostelium discoideum</name>
    <name type="common">Social amoeba</name>
    <dbReference type="NCBI Taxonomy" id="44689"/>
    <lineage>
        <taxon>Eukaryota</taxon>
        <taxon>Amoebozoa</taxon>
        <taxon>Evosea</taxon>
        <taxon>Eumycetozoa</taxon>
        <taxon>Dictyostelia</taxon>
        <taxon>Dictyosteliales</taxon>
        <taxon>Dictyosteliaceae</taxon>
        <taxon>Dictyostelium</taxon>
    </lineage>
</organism>
<name>PURCE_DICDI</name>
<proteinExistence type="evidence at protein level"/>
<dbReference type="EC" id="6.3.2.6"/>
<dbReference type="EC" id="4.1.1.21"/>
<dbReference type="EMBL" id="AAFI02000058">
    <property type="protein sequence ID" value="EAL65481.1"/>
    <property type="molecule type" value="Genomic_DNA"/>
</dbReference>
<dbReference type="RefSeq" id="XP_638800.1">
    <property type="nucleotide sequence ID" value="XM_633708.1"/>
</dbReference>
<dbReference type="SMR" id="Q54QE4"/>
<dbReference type="FunCoup" id="Q54QE4">
    <property type="interactions" value="42"/>
</dbReference>
<dbReference type="STRING" id="44689.Q54QE4"/>
<dbReference type="GlyGen" id="Q54QE4">
    <property type="glycosylation" value="1 site"/>
</dbReference>
<dbReference type="PaxDb" id="44689-DDB0230088"/>
<dbReference type="EnsemblProtists" id="EAL65481">
    <property type="protein sequence ID" value="EAL65481"/>
    <property type="gene ID" value="DDB_G0283987"/>
</dbReference>
<dbReference type="GeneID" id="8624324"/>
<dbReference type="KEGG" id="ddi:DDB_G0283987"/>
<dbReference type="dictyBase" id="DDB_G0283987">
    <property type="gene designation" value="purC/E"/>
</dbReference>
<dbReference type="VEuPathDB" id="AmoebaDB:DDB_G0283987"/>
<dbReference type="eggNOG" id="KOG2835">
    <property type="taxonomic scope" value="Eukaryota"/>
</dbReference>
<dbReference type="HOGENOM" id="CLU_300436_0_0_1"/>
<dbReference type="InParanoid" id="Q54QE4"/>
<dbReference type="OMA" id="WTIEGCV"/>
<dbReference type="UniPathway" id="UPA00074">
    <property type="reaction ID" value="UER00130"/>
</dbReference>
<dbReference type="UniPathway" id="UPA00074">
    <property type="reaction ID" value="UER00131"/>
</dbReference>
<dbReference type="PRO" id="PR:Q54QE4"/>
<dbReference type="Proteomes" id="UP000002195">
    <property type="component" value="Chromosome 4"/>
</dbReference>
<dbReference type="GO" id="GO:0005829">
    <property type="term" value="C:cytosol"/>
    <property type="evidence" value="ECO:0000318"/>
    <property type="project" value="GO_Central"/>
</dbReference>
<dbReference type="GO" id="GO:0005524">
    <property type="term" value="F:ATP binding"/>
    <property type="evidence" value="ECO:0007669"/>
    <property type="project" value="UniProtKB-KW"/>
</dbReference>
<dbReference type="GO" id="GO:0046872">
    <property type="term" value="F:metal ion binding"/>
    <property type="evidence" value="ECO:0007669"/>
    <property type="project" value="UniProtKB-KW"/>
</dbReference>
<dbReference type="GO" id="GO:0004638">
    <property type="term" value="F:phosphoribosylaminoimidazole carboxylase activity"/>
    <property type="evidence" value="ECO:0000250"/>
    <property type="project" value="dictyBase"/>
</dbReference>
<dbReference type="GO" id="GO:0004639">
    <property type="term" value="F:phosphoribosylaminoimidazolesuccinocarboxamide synthase activity"/>
    <property type="evidence" value="ECO:0000250"/>
    <property type="project" value="dictyBase"/>
</dbReference>
<dbReference type="GO" id="GO:0006189">
    <property type="term" value="P:'de novo' IMP biosynthetic process"/>
    <property type="evidence" value="ECO:0007669"/>
    <property type="project" value="UniProtKB-UniPathway"/>
</dbReference>
<dbReference type="GO" id="GO:0006144">
    <property type="term" value="P:purine nucleobase metabolic process"/>
    <property type="evidence" value="ECO:0000250"/>
    <property type="project" value="dictyBase"/>
</dbReference>
<dbReference type="CDD" id="cd01416">
    <property type="entry name" value="SAICAR_synt_Ade5"/>
    <property type="match status" value="1"/>
</dbReference>
<dbReference type="FunFam" id="3.30.1490.20:FF:000015">
    <property type="entry name" value="N5-carboxyaminoimidazole ribonucleotide synthase"/>
    <property type="match status" value="1"/>
</dbReference>
<dbReference type="FunFam" id="3.30.470.20:FF:000037">
    <property type="entry name" value="Phosphoribosylaminoimidazole carboxylase, chloroplastic"/>
    <property type="match status" value="1"/>
</dbReference>
<dbReference type="FunFam" id="3.30.470.20:FF:000020">
    <property type="entry name" value="Probable multifunctional protein ADE2"/>
    <property type="match status" value="1"/>
</dbReference>
<dbReference type="Gene3D" id="3.40.50.1970">
    <property type="match status" value="1"/>
</dbReference>
<dbReference type="Gene3D" id="3.40.50.20">
    <property type="match status" value="1"/>
</dbReference>
<dbReference type="Gene3D" id="3.30.1490.20">
    <property type="entry name" value="ATP-grasp fold, A domain"/>
    <property type="match status" value="1"/>
</dbReference>
<dbReference type="Gene3D" id="3.30.470.20">
    <property type="entry name" value="ATP-grasp fold, B domain"/>
    <property type="match status" value="2"/>
</dbReference>
<dbReference type="Gene3D" id="3.30.200.20">
    <property type="entry name" value="Phosphorylase Kinase, domain 1"/>
    <property type="match status" value="1"/>
</dbReference>
<dbReference type="HAMAP" id="MF_01929">
    <property type="entry name" value="PurE_classI"/>
    <property type="match status" value="1"/>
</dbReference>
<dbReference type="HAMAP" id="MF_01928">
    <property type="entry name" value="PurK"/>
    <property type="match status" value="1"/>
</dbReference>
<dbReference type="HAMAP" id="MF_00137">
    <property type="entry name" value="SAICAR_synth"/>
    <property type="match status" value="1"/>
</dbReference>
<dbReference type="InterPro" id="IPR011761">
    <property type="entry name" value="ATP-grasp"/>
</dbReference>
<dbReference type="InterPro" id="IPR003135">
    <property type="entry name" value="ATP-grasp_carboxylate-amine"/>
</dbReference>
<dbReference type="InterPro" id="IPR013815">
    <property type="entry name" value="ATP_grasp_subdomain_1"/>
</dbReference>
<dbReference type="InterPro" id="IPR016185">
    <property type="entry name" value="PreATP-grasp_dom_sf"/>
</dbReference>
<dbReference type="InterPro" id="IPR033747">
    <property type="entry name" value="PurE_ClassI"/>
</dbReference>
<dbReference type="InterPro" id="IPR000031">
    <property type="entry name" value="PurE_dom"/>
</dbReference>
<dbReference type="InterPro" id="IPR005875">
    <property type="entry name" value="PurK"/>
</dbReference>
<dbReference type="InterPro" id="IPR040686">
    <property type="entry name" value="PurK_C"/>
</dbReference>
<dbReference type="InterPro" id="IPR054350">
    <property type="entry name" value="PurT/PurK_preATP-grasp"/>
</dbReference>
<dbReference type="InterPro" id="IPR011054">
    <property type="entry name" value="Rudment_hybrid_motif"/>
</dbReference>
<dbReference type="InterPro" id="IPR028923">
    <property type="entry name" value="SAICAR_synt/ADE2_N"/>
</dbReference>
<dbReference type="InterPro" id="IPR018236">
    <property type="entry name" value="SAICAR_synthetase_CS"/>
</dbReference>
<dbReference type="NCBIfam" id="NF004676">
    <property type="entry name" value="PRK06019.1-2"/>
    <property type="match status" value="1"/>
</dbReference>
<dbReference type="NCBIfam" id="NF004679">
    <property type="entry name" value="PRK06019.1-5"/>
    <property type="match status" value="1"/>
</dbReference>
<dbReference type="NCBIfam" id="TIGR01162">
    <property type="entry name" value="purE"/>
    <property type="match status" value="1"/>
</dbReference>
<dbReference type="NCBIfam" id="TIGR01161">
    <property type="entry name" value="purK"/>
    <property type="match status" value="1"/>
</dbReference>
<dbReference type="PANTHER" id="PTHR11609:SF5">
    <property type="entry name" value="PHOSPHORIBOSYLAMINOIMIDAZOLE CARBOXYLASE"/>
    <property type="match status" value="1"/>
</dbReference>
<dbReference type="PANTHER" id="PTHR11609">
    <property type="entry name" value="PURINE BIOSYNTHESIS PROTEIN 6/7, PUR6/7"/>
    <property type="match status" value="1"/>
</dbReference>
<dbReference type="Pfam" id="PF00731">
    <property type="entry name" value="AIRC"/>
    <property type="match status" value="1"/>
</dbReference>
<dbReference type="Pfam" id="PF02222">
    <property type="entry name" value="ATP-grasp"/>
    <property type="match status" value="1"/>
</dbReference>
<dbReference type="Pfam" id="PF17769">
    <property type="entry name" value="PurK_C"/>
    <property type="match status" value="1"/>
</dbReference>
<dbReference type="Pfam" id="PF22660">
    <property type="entry name" value="RS_preATP-grasp-like"/>
    <property type="match status" value="1"/>
</dbReference>
<dbReference type="Pfam" id="PF01259">
    <property type="entry name" value="SAICAR_synt"/>
    <property type="match status" value="1"/>
</dbReference>
<dbReference type="SMART" id="SM01001">
    <property type="entry name" value="AIRC"/>
    <property type="match status" value="1"/>
</dbReference>
<dbReference type="SUPFAM" id="SSF56059">
    <property type="entry name" value="Glutathione synthetase ATP-binding domain-like"/>
    <property type="match status" value="1"/>
</dbReference>
<dbReference type="SUPFAM" id="SSF52255">
    <property type="entry name" value="N5-CAIR mutase (phosphoribosylaminoimidazole carboxylase, PurE)"/>
    <property type="match status" value="1"/>
</dbReference>
<dbReference type="SUPFAM" id="SSF52440">
    <property type="entry name" value="PreATP-grasp domain"/>
    <property type="match status" value="1"/>
</dbReference>
<dbReference type="SUPFAM" id="SSF51246">
    <property type="entry name" value="Rudiment single hybrid motif"/>
    <property type="match status" value="1"/>
</dbReference>
<dbReference type="SUPFAM" id="SSF56104">
    <property type="entry name" value="SAICAR synthase-like"/>
    <property type="match status" value="1"/>
</dbReference>
<dbReference type="PROSITE" id="PS50975">
    <property type="entry name" value="ATP_GRASP"/>
    <property type="match status" value="1"/>
</dbReference>
<dbReference type="PROSITE" id="PS01057">
    <property type="entry name" value="SAICAR_SYNTHETASE_1"/>
    <property type="match status" value="1"/>
</dbReference>
<protein>
    <recommendedName>
        <fullName>Bifunctional purine synthesis protein purC/E</fullName>
    </recommendedName>
    <domain>
        <recommendedName>
            <fullName>Phosphoribosylaminoimidazole-succinocarboxamide synthase</fullName>
            <ecNumber>6.3.2.6</ecNumber>
        </recommendedName>
        <alternativeName>
            <fullName>SAICAR synthetase</fullName>
        </alternativeName>
    </domain>
    <domain>
        <recommendedName>
            <fullName>Phosphoribosylaminoimidazole carboxylase</fullName>
            <ecNumber>4.1.1.21</ecNumber>
        </recommendedName>
        <alternativeName>
            <fullName>AIR carboxylase</fullName>
            <shortName>AIRC</shortName>
        </alternativeName>
    </domain>
</protein>
<accession>Q54QE4</accession>
<feature type="chain" id="PRO_0000388376" description="Bifunctional purine synthesis protein purC/E">
    <location>
        <begin position="1"/>
        <end position="997"/>
    </location>
</feature>
<feature type="domain" description="ATP-grasp">
    <location>
        <begin position="732"/>
        <end position="927"/>
    </location>
</feature>
<feature type="region of interest" description="SAICAR synthetase">
    <location>
        <begin position="1"/>
        <end position="305" status="uncertain"/>
    </location>
</feature>
<feature type="region of interest" description="Disordered" evidence="2">
    <location>
        <begin position="294"/>
        <end position="355"/>
    </location>
</feature>
<feature type="region of interest" description="AIR carboxylase">
    <location>
        <begin position="305" status="uncertain"/>
        <end position="997"/>
    </location>
</feature>
<feature type="region of interest" description="Disordered" evidence="2">
    <location>
        <begin position="518"/>
        <end position="538"/>
    </location>
</feature>
<feature type="region of interest" description="Disordered" evidence="2">
    <location>
        <begin position="550"/>
        <end position="569"/>
    </location>
</feature>
<feature type="region of interest" description="Disordered" evidence="2">
    <location>
        <begin position="575"/>
        <end position="604"/>
    </location>
</feature>
<feature type="compositionally biased region" description="Low complexity" evidence="2">
    <location>
        <begin position="294"/>
        <end position="323"/>
    </location>
</feature>
<feature type="compositionally biased region" description="Low complexity" evidence="2">
    <location>
        <begin position="342"/>
        <end position="355"/>
    </location>
</feature>
<feature type="compositionally biased region" description="Low complexity" evidence="2">
    <location>
        <begin position="524"/>
        <end position="536"/>
    </location>
</feature>
<feature type="compositionally biased region" description="Low complexity" evidence="2">
    <location>
        <begin position="575"/>
        <end position="597"/>
    </location>
</feature>
<feature type="binding site" evidence="1">
    <location>
        <position position="728"/>
    </location>
    <ligand>
        <name>ATP</name>
        <dbReference type="ChEBI" id="CHEBI:30616"/>
    </ligand>
</feature>
<feature type="binding site" evidence="1">
    <location>
        <position position="768"/>
    </location>
    <ligand>
        <name>ATP</name>
        <dbReference type="ChEBI" id="CHEBI:30616"/>
    </ligand>
</feature>
<feature type="binding site" evidence="1">
    <location>
        <position position="779"/>
    </location>
    <ligand>
        <name>ATP</name>
        <dbReference type="ChEBI" id="CHEBI:30616"/>
    </ligand>
</feature>
<feature type="binding site" evidence="1">
    <location>
        <begin position="807"/>
        <end position="810"/>
    </location>
    <ligand>
        <name>ATP</name>
        <dbReference type="ChEBI" id="CHEBI:30616"/>
    </ligand>
</feature>
<feature type="binding site" evidence="1">
    <location>
        <position position="815"/>
    </location>
    <ligand>
        <name>ATP</name>
        <dbReference type="ChEBI" id="CHEBI:30616"/>
    </ligand>
</feature>
<feature type="binding site" evidence="1">
    <location>
        <position position="880"/>
    </location>
    <ligand>
        <name>Mg(2+)</name>
        <dbReference type="ChEBI" id="CHEBI:18420"/>
    </ligand>
</feature>
<feature type="binding site" evidence="1">
    <location>
        <begin position="897"/>
        <end position="898"/>
    </location>
    <ligand>
        <name>ATP</name>
        <dbReference type="ChEBI" id="CHEBI:30616"/>
    </ligand>
</feature>
<feature type="binding site" evidence="1">
    <location>
        <position position="898"/>
    </location>
    <ligand>
        <name>Mg(2+)</name>
        <dbReference type="ChEBI" id="CHEBI:18420"/>
    </ligand>
</feature>
<gene>
    <name type="primary">purC/E</name>
    <name type="synonym">purC</name>
    <name type="synonym">purE</name>
    <name type="ORF">DDB_G0283987</name>
</gene>
<comment type="function">
    <text evidence="1">Bifunctional enzyme involved in de novo IMP synthesis, an essential step for de nove purine synthesis.</text>
</comment>
<comment type="catalytic activity">
    <reaction>
        <text>5-amino-1-(5-phospho-D-ribosyl)imidazole-4-carboxylate + L-aspartate + ATP = (2S)-2-[5-amino-1-(5-phospho-beta-D-ribosyl)imidazole-4-carboxamido]succinate + ADP + phosphate + 2 H(+)</text>
        <dbReference type="Rhea" id="RHEA:22628"/>
        <dbReference type="ChEBI" id="CHEBI:15378"/>
        <dbReference type="ChEBI" id="CHEBI:29991"/>
        <dbReference type="ChEBI" id="CHEBI:30616"/>
        <dbReference type="ChEBI" id="CHEBI:43474"/>
        <dbReference type="ChEBI" id="CHEBI:58443"/>
        <dbReference type="ChEBI" id="CHEBI:77657"/>
        <dbReference type="ChEBI" id="CHEBI:456216"/>
        <dbReference type="EC" id="6.3.2.6"/>
    </reaction>
</comment>
<comment type="catalytic activity">
    <reaction>
        <text>5-amino-1-(5-phospho-D-ribosyl)imidazole-4-carboxylate + H(+) = 5-amino-1-(5-phospho-beta-D-ribosyl)imidazole + CO2</text>
        <dbReference type="Rhea" id="RHEA:10792"/>
        <dbReference type="ChEBI" id="CHEBI:15378"/>
        <dbReference type="ChEBI" id="CHEBI:16526"/>
        <dbReference type="ChEBI" id="CHEBI:77657"/>
        <dbReference type="ChEBI" id="CHEBI:137981"/>
        <dbReference type="EC" id="4.1.1.21"/>
    </reaction>
</comment>
<comment type="cofactor">
    <cofactor evidence="1">
        <name>Mg(2+)</name>
        <dbReference type="ChEBI" id="CHEBI:18420"/>
    </cofactor>
    <cofactor evidence="1">
        <name>Mn(2+)</name>
        <dbReference type="ChEBI" id="CHEBI:29035"/>
    </cofactor>
</comment>
<comment type="pathway">
    <text>Purine metabolism; IMP biosynthesis via de novo pathway; 5-amino-1-(5-phospho-D-ribosyl)imidazole-4-carboxylate from 5-amino-1-(5-phospho-D-ribosyl)imidazole (carboxylase route): step 1/1.</text>
</comment>
<comment type="pathway">
    <text>Purine metabolism; IMP biosynthesis via de novo pathway; 5-amino-1-(5-phospho-D-ribosyl)imidazole-4-carboxamide from 5-amino-1-(5-phospho-D-ribosyl)imidazole-4-carboxylate: step 1/2.</text>
</comment>
<comment type="similarity">
    <text evidence="3">In the N-terminal section; belongs to the SAICAR synthetase family.</text>
</comment>
<comment type="similarity">
    <text evidence="3">In the C-terminal section; belongs to the AIR carboxylase family. Class I subfamily.</text>
</comment>
<reference key="1">
    <citation type="journal article" date="2005" name="Nature">
        <title>The genome of the social amoeba Dictyostelium discoideum.</title>
        <authorList>
            <person name="Eichinger L."/>
            <person name="Pachebat J.A."/>
            <person name="Gloeckner G."/>
            <person name="Rajandream M.A."/>
            <person name="Sucgang R."/>
            <person name="Berriman M."/>
            <person name="Song J."/>
            <person name="Olsen R."/>
            <person name="Szafranski K."/>
            <person name="Xu Q."/>
            <person name="Tunggal B."/>
            <person name="Kummerfeld S."/>
            <person name="Madera M."/>
            <person name="Konfortov B.A."/>
            <person name="Rivero F."/>
            <person name="Bankier A.T."/>
            <person name="Lehmann R."/>
            <person name="Hamlin N."/>
            <person name="Davies R."/>
            <person name="Gaudet P."/>
            <person name="Fey P."/>
            <person name="Pilcher K."/>
            <person name="Chen G."/>
            <person name="Saunders D."/>
            <person name="Sodergren E.J."/>
            <person name="Davis P."/>
            <person name="Kerhornou A."/>
            <person name="Nie X."/>
            <person name="Hall N."/>
            <person name="Anjard C."/>
            <person name="Hemphill L."/>
            <person name="Bason N."/>
            <person name="Farbrother P."/>
            <person name="Desany B."/>
            <person name="Just E."/>
            <person name="Morio T."/>
            <person name="Rost R."/>
            <person name="Churcher C.M."/>
            <person name="Cooper J."/>
            <person name="Haydock S."/>
            <person name="van Driessche N."/>
            <person name="Cronin A."/>
            <person name="Goodhead I."/>
            <person name="Muzny D.M."/>
            <person name="Mourier T."/>
            <person name="Pain A."/>
            <person name="Lu M."/>
            <person name="Harper D."/>
            <person name="Lindsay R."/>
            <person name="Hauser H."/>
            <person name="James K.D."/>
            <person name="Quiles M."/>
            <person name="Madan Babu M."/>
            <person name="Saito T."/>
            <person name="Buchrieser C."/>
            <person name="Wardroper A."/>
            <person name="Felder M."/>
            <person name="Thangavelu M."/>
            <person name="Johnson D."/>
            <person name="Knights A."/>
            <person name="Loulseged H."/>
            <person name="Mungall K.L."/>
            <person name="Oliver K."/>
            <person name="Price C."/>
            <person name="Quail M.A."/>
            <person name="Urushihara H."/>
            <person name="Hernandez J."/>
            <person name="Rabbinowitsch E."/>
            <person name="Steffen D."/>
            <person name="Sanders M."/>
            <person name="Ma J."/>
            <person name="Kohara Y."/>
            <person name="Sharp S."/>
            <person name="Simmonds M.N."/>
            <person name="Spiegler S."/>
            <person name="Tivey A."/>
            <person name="Sugano S."/>
            <person name="White B."/>
            <person name="Walker D."/>
            <person name="Woodward J.R."/>
            <person name="Winckler T."/>
            <person name="Tanaka Y."/>
            <person name="Shaulsky G."/>
            <person name="Schleicher M."/>
            <person name="Weinstock G.M."/>
            <person name="Rosenthal A."/>
            <person name="Cox E.C."/>
            <person name="Chisholm R.L."/>
            <person name="Gibbs R.A."/>
            <person name="Loomis W.F."/>
            <person name="Platzer M."/>
            <person name="Kay R.R."/>
            <person name="Williams J.G."/>
            <person name="Dear P.H."/>
            <person name="Noegel A.A."/>
            <person name="Barrell B.G."/>
            <person name="Kuspa A."/>
        </authorList>
    </citation>
    <scope>NUCLEOTIDE SEQUENCE [LARGE SCALE GENOMIC DNA]</scope>
    <source>
        <strain>AX4</strain>
    </source>
</reference>
<reference key="2">
    <citation type="submission" date="2008-10" db="UniProtKB">
        <authorList>
            <person name="Bienvenut W.V."/>
            <person name="Sumpton D."/>
            <person name="Ura S."/>
            <person name="Insall R.H."/>
        </authorList>
    </citation>
    <scope>PROTEIN SEQUENCE OF 76-98; 161-169; 643-654; 676-689; 712-720; 761-768 AND 823-837</scope>
    <scope>IDENTIFICATION BY MASS SPECTROMETRY</scope>
    <source>
        <strain>AX2</strain>
    </source>
</reference>
<sequence>MTTAINNNIVNKEFDLKDKTFLASGKTKTIYQLNKEDQYVLIESNSAITAGDGAKKDILPNKDIYSTTTTVNNFKVLQLSGINTHFVKQVEPNAFIAKKCSMIPLEVIVRRLATGSYLKRNTHVTEGTKFNPPLIEFTFKDDVQHDPLVTEQDILEMNLKIGGVPITSKLLSQTRHIATLSFEALERAWQSLDVTLVDFKVEFGITSQGELILADVIDNDSWRIWPKGDKTLMKDKQVYRNLPSALNTPGATPTTQSGPLLNTLSDQQLKMIEDNYAWVATSTEKLVEFTAANLNNNNNNNNNNSNNNNNNTSSTSRSNSLPNVPSITTTPTLHHHHHHHQQQQSGVGNNNNVNSGFQVQLNQPLVGIIMGSQSDWETMKLAANTLTTLGVPFETRIVSAHRTPDRLFEYAKTAKSRGLKIVIAGAGGAAHLPGMVAALTPLPVFGVPVQSKALSGVDSLLSIVQMPAGIPVGTVAIGAAGATNAALLSAAVLAPYYPSIELSLDLYRKKQTDAVAEIPVDNPTSTSTTTTTTTTSNATSILSAIHTSTINSNTSSHNNNQQQQQQQQTILPTQPTIINTPTPVRSSVSRSQSPLPSGNGSSIISQEKTPLSTFVLSTCRPSALVLPPGSTIGILGGGQLARMMAIAAAQLGYKTHIFCPENDPSASHVATYTTKSNYNNYSALDIFARQVDVVTYEFENIMVEPVEYLTKQVAVFPDPKILRTCQDRVLEKTFIQSLDIPTAQFQSVESFNDLKSAIEKIGYPAILKSNTMGYDGKGQVKLTDQVDLEQAWKKVTSETCATKAILEQYIEFESEASVIVARALDGTELTFPLVTNKHRNHILRQTIAPAQLPEYIHKQANEIGLKIARSNGLVGIIAVELFVVKNNETGQYSLMVNELAPRPHNSGHWTIEGCVTSQFEQLIRCVCGLPLGSVDFTKRISEAEFIQQQIPPIVMTNLLGQEVNGWEKILQTKGSHLHIYAKGDAKEGRKMGHVTQQ</sequence>
<keyword id="KW-0067">ATP-binding</keyword>
<keyword id="KW-0210">Decarboxylase</keyword>
<keyword id="KW-0903">Direct protein sequencing</keyword>
<keyword id="KW-0436">Ligase</keyword>
<keyword id="KW-0456">Lyase</keyword>
<keyword id="KW-0460">Magnesium</keyword>
<keyword id="KW-0464">Manganese</keyword>
<keyword id="KW-0479">Metal-binding</keyword>
<keyword id="KW-0511">Multifunctional enzyme</keyword>
<keyword id="KW-0547">Nucleotide-binding</keyword>
<keyword id="KW-0658">Purine biosynthesis</keyword>
<keyword id="KW-1185">Reference proteome</keyword>
<evidence type="ECO:0000250" key="1"/>
<evidence type="ECO:0000256" key="2">
    <source>
        <dbReference type="SAM" id="MobiDB-lite"/>
    </source>
</evidence>
<evidence type="ECO:0000305" key="3"/>